<keyword id="KW-0012">Acyltransferase</keyword>
<keyword id="KW-0441">Lipid A biosynthesis</keyword>
<keyword id="KW-0444">Lipid biosynthesis</keyword>
<keyword id="KW-0443">Lipid metabolism</keyword>
<keyword id="KW-1185">Reference proteome</keyword>
<keyword id="KW-0677">Repeat</keyword>
<keyword id="KW-0808">Transferase</keyword>
<organism>
    <name type="scientific">Gloeobacter violaceus (strain ATCC 29082 / PCC 7421)</name>
    <dbReference type="NCBI Taxonomy" id="251221"/>
    <lineage>
        <taxon>Bacteria</taxon>
        <taxon>Bacillati</taxon>
        <taxon>Cyanobacteriota</taxon>
        <taxon>Cyanophyceae</taxon>
        <taxon>Gloeobacterales</taxon>
        <taxon>Gloeobacteraceae</taxon>
        <taxon>Gloeobacter</taxon>
    </lineage>
</organism>
<feature type="chain" id="PRO_0000059674" description="UDP-3-O-acylglucosamine N-acyltransferase 2">
    <location>
        <begin position="1"/>
        <end position="373"/>
    </location>
</feature>
<feature type="region of interest" description="Disordered" evidence="2">
    <location>
        <begin position="345"/>
        <end position="373"/>
    </location>
</feature>
<feature type="active site" description="Proton acceptor" evidence="1">
    <location>
        <position position="239"/>
    </location>
</feature>
<proteinExistence type="inferred from homology"/>
<evidence type="ECO:0000255" key="1">
    <source>
        <dbReference type="HAMAP-Rule" id="MF_00523"/>
    </source>
</evidence>
<evidence type="ECO:0000256" key="2">
    <source>
        <dbReference type="SAM" id="MobiDB-lite"/>
    </source>
</evidence>
<gene>
    <name evidence="1" type="primary">lpxD2</name>
    <name type="ordered locus">glr2011</name>
</gene>
<comment type="function">
    <text evidence="1">Catalyzes the N-acylation of UDP-3-O-acylglucosamine using 3-hydroxyacyl-ACP as the acyl donor. Is involved in the biosynthesis of lipid A, a phosphorylated glycolipid that anchors the lipopolysaccharide to the outer membrane of the cell.</text>
</comment>
<comment type="catalytic activity">
    <reaction evidence="1">
        <text>a UDP-3-O-[(3R)-3-hydroxyacyl]-alpha-D-glucosamine + a (3R)-hydroxyacyl-[ACP] = a UDP-2-N,3-O-bis[(3R)-3-hydroxyacyl]-alpha-D-glucosamine + holo-[ACP] + H(+)</text>
        <dbReference type="Rhea" id="RHEA:53836"/>
        <dbReference type="Rhea" id="RHEA-COMP:9685"/>
        <dbReference type="Rhea" id="RHEA-COMP:9945"/>
        <dbReference type="ChEBI" id="CHEBI:15378"/>
        <dbReference type="ChEBI" id="CHEBI:64479"/>
        <dbReference type="ChEBI" id="CHEBI:78827"/>
        <dbReference type="ChEBI" id="CHEBI:137740"/>
        <dbReference type="ChEBI" id="CHEBI:137748"/>
        <dbReference type="EC" id="2.3.1.191"/>
    </reaction>
</comment>
<comment type="pathway">
    <text evidence="1">Bacterial outer membrane biogenesis; LPS lipid A biosynthesis.</text>
</comment>
<comment type="subunit">
    <text evidence="1">Homotrimer.</text>
</comment>
<comment type="similarity">
    <text evidence="1">Belongs to the transferase hexapeptide repeat family. LpxD subfamily.</text>
</comment>
<accession>Q7NJ21</accession>
<name>LPXD2_GLOVI</name>
<reference key="1">
    <citation type="journal article" date="2003" name="DNA Res.">
        <title>Complete genome structure of Gloeobacter violaceus PCC 7421, a cyanobacterium that lacks thylakoids.</title>
        <authorList>
            <person name="Nakamura Y."/>
            <person name="Kaneko T."/>
            <person name="Sato S."/>
            <person name="Mimuro M."/>
            <person name="Miyashita H."/>
            <person name="Tsuchiya T."/>
            <person name="Sasamoto S."/>
            <person name="Watanabe A."/>
            <person name="Kawashima K."/>
            <person name="Kishida Y."/>
            <person name="Kiyokawa C."/>
            <person name="Kohara M."/>
            <person name="Matsumoto M."/>
            <person name="Matsuno A."/>
            <person name="Nakazaki N."/>
            <person name="Shimpo S."/>
            <person name="Takeuchi C."/>
            <person name="Yamada M."/>
            <person name="Tabata S."/>
        </authorList>
    </citation>
    <scope>NUCLEOTIDE SEQUENCE [LARGE SCALE GENOMIC DNA]</scope>
    <source>
        <strain>ATCC 29082 / PCC 7421</strain>
    </source>
</reference>
<dbReference type="EC" id="2.3.1.191" evidence="1"/>
<dbReference type="EMBL" id="BA000045">
    <property type="protein sequence ID" value="BAC89952.1"/>
    <property type="molecule type" value="Genomic_DNA"/>
</dbReference>
<dbReference type="RefSeq" id="NP_924957.1">
    <property type="nucleotide sequence ID" value="NC_005125.1"/>
</dbReference>
<dbReference type="RefSeq" id="WP_011142009.1">
    <property type="nucleotide sequence ID" value="NC_005125.1"/>
</dbReference>
<dbReference type="SMR" id="Q7NJ21"/>
<dbReference type="STRING" id="251221.gene:10759503"/>
<dbReference type="EnsemblBacteria" id="BAC89952">
    <property type="protein sequence ID" value="BAC89952"/>
    <property type="gene ID" value="BAC89952"/>
</dbReference>
<dbReference type="KEGG" id="gvi:glr2011"/>
<dbReference type="PATRIC" id="fig|251221.4.peg.2045"/>
<dbReference type="eggNOG" id="COG1044">
    <property type="taxonomic scope" value="Bacteria"/>
</dbReference>
<dbReference type="HOGENOM" id="CLU_049865_0_0_3"/>
<dbReference type="InParanoid" id="Q7NJ21"/>
<dbReference type="OrthoDB" id="9784739at2"/>
<dbReference type="PhylomeDB" id="Q7NJ21"/>
<dbReference type="UniPathway" id="UPA00973"/>
<dbReference type="Proteomes" id="UP000000557">
    <property type="component" value="Chromosome"/>
</dbReference>
<dbReference type="GO" id="GO:0031470">
    <property type="term" value="C:carboxysome"/>
    <property type="evidence" value="ECO:0007669"/>
    <property type="project" value="UniProtKB-ARBA"/>
</dbReference>
<dbReference type="GO" id="GO:0016020">
    <property type="term" value="C:membrane"/>
    <property type="evidence" value="ECO:0007669"/>
    <property type="project" value="GOC"/>
</dbReference>
<dbReference type="GO" id="GO:0016410">
    <property type="term" value="F:N-acyltransferase activity"/>
    <property type="evidence" value="ECO:0007669"/>
    <property type="project" value="InterPro"/>
</dbReference>
<dbReference type="GO" id="GO:0043886">
    <property type="term" value="F:structural constituent of carboxysome shell"/>
    <property type="evidence" value="ECO:0007669"/>
    <property type="project" value="UniProtKB-ARBA"/>
</dbReference>
<dbReference type="GO" id="GO:0009245">
    <property type="term" value="P:lipid A biosynthetic process"/>
    <property type="evidence" value="ECO:0007669"/>
    <property type="project" value="UniProtKB-UniRule"/>
</dbReference>
<dbReference type="CDD" id="cd03352">
    <property type="entry name" value="LbH_LpxD"/>
    <property type="match status" value="1"/>
</dbReference>
<dbReference type="Gene3D" id="2.160.10.10">
    <property type="entry name" value="Hexapeptide repeat proteins"/>
    <property type="match status" value="1"/>
</dbReference>
<dbReference type="Gene3D" id="3.40.1390.10">
    <property type="entry name" value="MurE/MurF, N-terminal domain"/>
    <property type="match status" value="1"/>
</dbReference>
<dbReference type="HAMAP" id="MF_00523">
    <property type="entry name" value="LpxD"/>
    <property type="match status" value="1"/>
</dbReference>
<dbReference type="InterPro" id="IPR001451">
    <property type="entry name" value="Hexapep"/>
</dbReference>
<dbReference type="InterPro" id="IPR018357">
    <property type="entry name" value="Hexapep_transf_CS"/>
</dbReference>
<dbReference type="InterPro" id="IPR007691">
    <property type="entry name" value="LpxD"/>
</dbReference>
<dbReference type="InterPro" id="IPR011004">
    <property type="entry name" value="Trimer_LpxA-like_sf"/>
</dbReference>
<dbReference type="InterPro" id="IPR020573">
    <property type="entry name" value="UDP_GlcNAc_AcTrfase_non-rep"/>
</dbReference>
<dbReference type="NCBIfam" id="TIGR01853">
    <property type="entry name" value="lipid_A_lpxD"/>
    <property type="match status" value="1"/>
</dbReference>
<dbReference type="NCBIfam" id="NF002060">
    <property type="entry name" value="PRK00892.1"/>
    <property type="match status" value="1"/>
</dbReference>
<dbReference type="PANTHER" id="PTHR43378">
    <property type="entry name" value="UDP-3-O-ACYLGLUCOSAMINE N-ACYLTRANSFERASE"/>
    <property type="match status" value="1"/>
</dbReference>
<dbReference type="PANTHER" id="PTHR43378:SF2">
    <property type="entry name" value="UDP-3-O-ACYLGLUCOSAMINE N-ACYLTRANSFERASE 1, MITOCHONDRIAL-RELATED"/>
    <property type="match status" value="1"/>
</dbReference>
<dbReference type="Pfam" id="PF00132">
    <property type="entry name" value="Hexapep"/>
    <property type="match status" value="1"/>
</dbReference>
<dbReference type="Pfam" id="PF04613">
    <property type="entry name" value="LpxD"/>
    <property type="match status" value="1"/>
</dbReference>
<dbReference type="SUPFAM" id="SSF51161">
    <property type="entry name" value="Trimeric LpxA-like enzymes"/>
    <property type="match status" value="1"/>
</dbReference>
<dbReference type="PROSITE" id="PS00101">
    <property type="entry name" value="HEXAPEP_TRANSFERASES"/>
    <property type="match status" value="1"/>
</dbReference>
<protein>
    <recommendedName>
        <fullName evidence="1">UDP-3-O-acylglucosamine N-acyltransferase 2</fullName>
        <ecNumber evidence="1">2.3.1.191</ecNumber>
    </recommendedName>
</protein>
<sequence length="373" mass="39027">MKLSDISAKLGCALEGDGQVDIVGIAGIEEAEAGHLTFLSNPKYKAKLRHTKASAAIVPADFEASAAWPLPLLRHANPYLTFAHAIELFYSPPPAPHGVHPTAVVAPTAVCGHNVRIGASSVIGEGVVLADGVTVYPNCTIYPGVRIGRNSTIHSNCVVREHVVIGEDCIVQNGAVIGADGFGYAKQADGTWYKIVQSGSVVLENRVEIGACTTVDRATIGETRIKSGSKLDNLVMIGHGSSVGENTLLCGQVGLAGSSTVGRNVMLAGQVGVAGHLHIGDNVVATVKSCIWKSVEANQVLYGNIPASDSHTWLKASAVFRQLPHMQKSVQQMQKRIAVLEEPFKTNGKSGQADAPPKVALECHGTTGDAPQG</sequence>